<proteinExistence type="inferred from homology"/>
<comment type="function">
    <text evidence="1">Catalyzes the condensation of (S)-aspartate-beta-semialdehyde [(S)-ASA] and pyruvate to 4-hydroxy-tetrahydrodipicolinate (HTPA).</text>
</comment>
<comment type="catalytic activity">
    <reaction evidence="1">
        <text>L-aspartate 4-semialdehyde + pyruvate = (2S,4S)-4-hydroxy-2,3,4,5-tetrahydrodipicolinate + H2O + H(+)</text>
        <dbReference type="Rhea" id="RHEA:34171"/>
        <dbReference type="ChEBI" id="CHEBI:15361"/>
        <dbReference type="ChEBI" id="CHEBI:15377"/>
        <dbReference type="ChEBI" id="CHEBI:15378"/>
        <dbReference type="ChEBI" id="CHEBI:67139"/>
        <dbReference type="ChEBI" id="CHEBI:537519"/>
        <dbReference type="EC" id="4.3.3.7"/>
    </reaction>
</comment>
<comment type="pathway">
    <text evidence="1">Amino-acid biosynthesis; L-lysine biosynthesis via DAP pathway; (S)-tetrahydrodipicolinate from L-aspartate: step 3/4.</text>
</comment>
<comment type="subunit">
    <text evidence="1">Homotetramer; dimer of dimers.</text>
</comment>
<comment type="subcellular location">
    <subcellularLocation>
        <location evidence="1">Cytoplasm</location>
    </subcellularLocation>
</comment>
<comment type="similarity">
    <text evidence="1">Belongs to the DapA family.</text>
</comment>
<comment type="caution">
    <text evidence="2">Was originally thought to be a dihydrodipicolinate synthase (DHDPS), catalyzing the condensation of (S)-aspartate-beta-semialdehyde [(S)-ASA] and pyruvate to dihydrodipicolinate (DHDP). However, it was shown in E.coli that the product of the enzymatic reaction is not dihydrodipicolinate but in fact (4S)-4-hydroxy-2,3,4,5-tetrahydro-(2S)-dipicolinic acid (HTPA), and that the consecutive dehydration reaction leading to DHDP is not spontaneous but catalyzed by DapB.</text>
</comment>
<feature type="chain" id="PRO_1000050228" description="4-hydroxy-tetrahydrodipicolinate synthase">
    <location>
        <begin position="1"/>
        <end position="294"/>
    </location>
</feature>
<feature type="active site" description="Proton donor/acceptor" evidence="1">
    <location>
        <position position="136"/>
    </location>
</feature>
<feature type="active site" description="Schiff-base intermediate with substrate" evidence="1">
    <location>
        <position position="164"/>
    </location>
</feature>
<feature type="binding site" evidence="1">
    <location>
        <position position="49"/>
    </location>
    <ligand>
        <name>pyruvate</name>
        <dbReference type="ChEBI" id="CHEBI:15361"/>
    </ligand>
</feature>
<feature type="binding site" evidence="1">
    <location>
        <position position="207"/>
    </location>
    <ligand>
        <name>pyruvate</name>
        <dbReference type="ChEBI" id="CHEBI:15361"/>
    </ligand>
</feature>
<feature type="site" description="Part of a proton relay during catalysis" evidence="1">
    <location>
        <position position="48"/>
    </location>
</feature>
<feature type="site" description="Part of a proton relay during catalysis" evidence="1">
    <location>
        <position position="110"/>
    </location>
</feature>
<reference key="1">
    <citation type="journal article" date="2005" name="Genome Res.">
        <title>Living with two extremes: conclusions from the genome sequence of Natronomonas pharaonis.</title>
        <authorList>
            <person name="Falb M."/>
            <person name="Pfeiffer F."/>
            <person name="Palm P."/>
            <person name="Rodewald K."/>
            <person name="Hickmann V."/>
            <person name="Tittor J."/>
            <person name="Oesterhelt D."/>
        </authorList>
    </citation>
    <scope>NUCLEOTIDE SEQUENCE [LARGE SCALE GENOMIC DNA]</scope>
    <source>
        <strain>ATCC 35678 / DSM 2160 / CIP 103997 / JCM 8858 / NBRC 14720 / NCIMB 2260 / Gabara</strain>
    </source>
</reference>
<keyword id="KW-0028">Amino-acid biosynthesis</keyword>
<keyword id="KW-0963">Cytoplasm</keyword>
<keyword id="KW-0220">Diaminopimelate biosynthesis</keyword>
<keyword id="KW-0456">Lyase</keyword>
<keyword id="KW-0457">Lysine biosynthesis</keyword>
<keyword id="KW-1185">Reference proteome</keyword>
<keyword id="KW-0704">Schiff base</keyword>
<name>DAPA_NATPD</name>
<evidence type="ECO:0000255" key="1">
    <source>
        <dbReference type="HAMAP-Rule" id="MF_00418"/>
    </source>
</evidence>
<evidence type="ECO:0000305" key="2"/>
<accession>Q3ISQ0</accession>
<protein>
    <recommendedName>
        <fullName evidence="1">4-hydroxy-tetrahydrodipicolinate synthase</fullName>
        <shortName evidence="1">HTPA synthase</shortName>
        <ecNumber evidence="1">4.3.3.7</ecNumber>
    </recommendedName>
</protein>
<gene>
    <name evidence="1" type="primary">dapA</name>
    <name type="ordered locus">NP_1490A</name>
</gene>
<dbReference type="EC" id="4.3.3.7" evidence="1"/>
<dbReference type="EMBL" id="CR936257">
    <property type="protein sequence ID" value="CAI48836.1"/>
    <property type="molecule type" value="Genomic_DNA"/>
</dbReference>
<dbReference type="RefSeq" id="WP_011322470.1">
    <property type="nucleotide sequence ID" value="NC_007426.1"/>
</dbReference>
<dbReference type="SMR" id="Q3ISQ0"/>
<dbReference type="STRING" id="348780.NP_1490A"/>
<dbReference type="EnsemblBacteria" id="CAI48836">
    <property type="protein sequence ID" value="CAI48836"/>
    <property type="gene ID" value="NP_1490A"/>
</dbReference>
<dbReference type="GeneID" id="3702656"/>
<dbReference type="KEGG" id="nph:NP_1490A"/>
<dbReference type="eggNOG" id="arCOG04172">
    <property type="taxonomic scope" value="Archaea"/>
</dbReference>
<dbReference type="HOGENOM" id="CLU_049343_7_1_2"/>
<dbReference type="OrthoDB" id="33636at2157"/>
<dbReference type="UniPathway" id="UPA00034">
    <property type="reaction ID" value="UER00017"/>
</dbReference>
<dbReference type="Proteomes" id="UP000002698">
    <property type="component" value="Chromosome"/>
</dbReference>
<dbReference type="GO" id="GO:0005737">
    <property type="term" value="C:cytoplasm"/>
    <property type="evidence" value="ECO:0007669"/>
    <property type="project" value="UniProtKB-SubCell"/>
</dbReference>
<dbReference type="GO" id="GO:0008675">
    <property type="term" value="F:2-dehydro-3-deoxy-phosphogluconate aldolase activity"/>
    <property type="evidence" value="ECO:0007669"/>
    <property type="project" value="UniProtKB-ARBA"/>
</dbReference>
<dbReference type="GO" id="GO:0008840">
    <property type="term" value="F:4-hydroxy-tetrahydrodipicolinate synthase activity"/>
    <property type="evidence" value="ECO:0007669"/>
    <property type="project" value="UniProtKB-UniRule"/>
</dbReference>
<dbReference type="GO" id="GO:0019877">
    <property type="term" value="P:diaminopimelate biosynthetic process"/>
    <property type="evidence" value="ECO:0007669"/>
    <property type="project" value="UniProtKB-UniRule"/>
</dbReference>
<dbReference type="GO" id="GO:0009089">
    <property type="term" value="P:lysine biosynthetic process via diaminopimelate"/>
    <property type="evidence" value="ECO:0007669"/>
    <property type="project" value="UniProtKB-UniRule"/>
</dbReference>
<dbReference type="CDD" id="cd00950">
    <property type="entry name" value="DHDPS"/>
    <property type="match status" value="1"/>
</dbReference>
<dbReference type="Gene3D" id="3.20.20.70">
    <property type="entry name" value="Aldolase class I"/>
    <property type="match status" value="1"/>
</dbReference>
<dbReference type="HAMAP" id="MF_00418">
    <property type="entry name" value="DapA"/>
    <property type="match status" value="1"/>
</dbReference>
<dbReference type="InterPro" id="IPR013785">
    <property type="entry name" value="Aldolase_TIM"/>
</dbReference>
<dbReference type="InterPro" id="IPR005263">
    <property type="entry name" value="DapA"/>
</dbReference>
<dbReference type="InterPro" id="IPR002220">
    <property type="entry name" value="DapA-like"/>
</dbReference>
<dbReference type="InterPro" id="IPR020624">
    <property type="entry name" value="Schiff_base-form_aldolases_CS"/>
</dbReference>
<dbReference type="NCBIfam" id="TIGR00674">
    <property type="entry name" value="dapA"/>
    <property type="match status" value="1"/>
</dbReference>
<dbReference type="PANTHER" id="PTHR12128:SF66">
    <property type="entry name" value="4-HYDROXY-2-OXOGLUTARATE ALDOLASE, MITOCHONDRIAL"/>
    <property type="match status" value="1"/>
</dbReference>
<dbReference type="PANTHER" id="PTHR12128">
    <property type="entry name" value="DIHYDRODIPICOLINATE SYNTHASE"/>
    <property type="match status" value="1"/>
</dbReference>
<dbReference type="Pfam" id="PF00701">
    <property type="entry name" value="DHDPS"/>
    <property type="match status" value="1"/>
</dbReference>
<dbReference type="PIRSF" id="PIRSF001365">
    <property type="entry name" value="DHDPS"/>
    <property type="match status" value="1"/>
</dbReference>
<dbReference type="PRINTS" id="PR00146">
    <property type="entry name" value="DHPICSNTHASE"/>
</dbReference>
<dbReference type="SMART" id="SM01130">
    <property type="entry name" value="DHDPS"/>
    <property type="match status" value="1"/>
</dbReference>
<dbReference type="SUPFAM" id="SSF51569">
    <property type="entry name" value="Aldolase"/>
    <property type="match status" value="1"/>
</dbReference>
<dbReference type="PROSITE" id="PS00665">
    <property type="entry name" value="DHDPS_1"/>
    <property type="match status" value="1"/>
</dbReference>
<organism>
    <name type="scientific">Natronomonas pharaonis (strain ATCC 35678 / DSM 2160 / CIP 103997 / JCM 8858 / NBRC 14720 / NCIMB 2260 / Gabara)</name>
    <name type="common">Halobacterium pharaonis</name>
    <dbReference type="NCBI Taxonomy" id="348780"/>
    <lineage>
        <taxon>Archaea</taxon>
        <taxon>Methanobacteriati</taxon>
        <taxon>Methanobacteriota</taxon>
        <taxon>Stenosarchaea group</taxon>
        <taxon>Halobacteria</taxon>
        <taxon>Halobacteriales</taxon>
        <taxon>Haloarculaceae</taxon>
        <taxon>Natronomonas</taxon>
    </lineage>
</organism>
<sequence>MTHDTFTGVFPAMTTPFDDEERIDHETLRDHAQRLEAAGVDGLVPVGTTGESATMSHDEHIEVVETVVDAVDDVPVIAGSGSNNTREALELSERAADAGADGLLLISPYYNIPEPEGMETHYRTVADAVDLPQIIYNVPGRTGRNIAVETAVSLAEHENIVGYKAASGDLNRVGEVIERTREENFEVLSGDDALTLPIIAQGGTGCISVSANVEPERTVALVGAALEGDFTRARELQYELGDLFRTLFIETNPIPINEAMDMRDIHSSTMRSPLNPLQPEHREQLREVLADLER</sequence>